<proteinExistence type="evidence at protein level"/>
<comment type="function">
    <text evidence="2">May catalyze the initial reaction in O-linked oligosaccharide biosynthesis, the transfer of an N-acetyl-D-galactosamine residue to a serine or threonine residue on the protein receptor.</text>
</comment>
<comment type="catalytic activity">
    <reaction evidence="2">
        <text>L-seryl-[protein] + UDP-N-acetyl-alpha-D-galactosamine = a 3-O-[N-acetyl-alpha-D-galactosaminyl]-L-seryl-[protein] + UDP + H(+)</text>
        <dbReference type="Rhea" id="RHEA:23956"/>
        <dbReference type="Rhea" id="RHEA-COMP:9863"/>
        <dbReference type="Rhea" id="RHEA-COMP:12788"/>
        <dbReference type="ChEBI" id="CHEBI:15378"/>
        <dbReference type="ChEBI" id="CHEBI:29999"/>
        <dbReference type="ChEBI" id="CHEBI:53604"/>
        <dbReference type="ChEBI" id="CHEBI:58223"/>
        <dbReference type="ChEBI" id="CHEBI:67138"/>
        <dbReference type="EC" id="2.4.1.41"/>
    </reaction>
</comment>
<comment type="catalytic activity">
    <reaction evidence="2">
        <text>L-threonyl-[protein] + UDP-N-acetyl-alpha-D-galactosamine = a 3-O-[N-acetyl-alpha-D-galactosaminyl]-L-threonyl-[protein] + UDP + H(+)</text>
        <dbReference type="Rhea" id="RHEA:52424"/>
        <dbReference type="Rhea" id="RHEA-COMP:11060"/>
        <dbReference type="Rhea" id="RHEA-COMP:11689"/>
        <dbReference type="ChEBI" id="CHEBI:15378"/>
        <dbReference type="ChEBI" id="CHEBI:30013"/>
        <dbReference type="ChEBI" id="CHEBI:58223"/>
        <dbReference type="ChEBI" id="CHEBI:67138"/>
        <dbReference type="ChEBI" id="CHEBI:87075"/>
        <dbReference type="EC" id="2.4.1.41"/>
    </reaction>
</comment>
<comment type="cofactor">
    <cofactor evidence="2">
        <name>Mn(2+)</name>
        <dbReference type="ChEBI" id="CHEBI:29035"/>
    </cofactor>
</comment>
<comment type="pathway">
    <text evidence="2">Protein modification; protein glycosylation.</text>
</comment>
<comment type="subcellular location">
    <subcellularLocation>
        <location evidence="1">Golgi apparatus membrane</location>
        <topology evidence="1">Single-pass type II membrane protein</topology>
    </subcellularLocation>
</comment>
<comment type="tissue specificity">
    <text evidence="5">Highly expressed in brain and heart. Weakly expressed in kidney, liver, lung and spleen.</text>
</comment>
<comment type="domain">
    <text evidence="1">There are two conserved domains in the glycosyltransferase region: the N-terminal domain (domain A, also called GT1 motif), which is probably involved in manganese coordination and substrate binding and the C-terminal domain (domain B, also called Gal/GalNAc-T motif), which is probably involved in catalytic reaction and UDP-Gal binding.</text>
</comment>
<comment type="domain">
    <text evidence="1">The ricin B-type lectin domain binds to GalNAc and contributes to the glycopeptide specificity.</text>
</comment>
<comment type="disease">
    <text>WBSCR17 is located in the Williams-Beuren syndrome (WBS) critical region. WBS results from a hemizygous deletion of several genes on chromosome 7q11.23, thought to arise as a consequence of unequal crossing over between highly homologous low-copy repeat sequences flanking the deleted region.</text>
</comment>
<comment type="similarity">
    <text evidence="7">Belongs to the glycosyltransferase 2 family. GalNAc-T subfamily.</text>
</comment>
<comment type="online information" name="Functional Glycomics Gateway - GTase">
    <link uri="http://www.functionalglycomics.org/glycomics/molecule/jsp/glycoEnzyme/viewGlycoEnzyme.jsp?gbpId=gt_hum_500"/>
    <text>Putative polypeptide N-acetylgalactosaminyltransferase-like protein 3</text>
</comment>
<reference key="1">
    <citation type="journal article" date="2002" name="Hum. Genet.">
        <title>Identification of additional transcripts in the Williams-Beuren syndrome critical region.</title>
        <authorList>
            <person name="Merla G."/>
            <person name="Ucla C."/>
            <person name="Guipponi M."/>
            <person name="Reymond A."/>
        </authorList>
    </citation>
    <scope>NUCLEOTIDE SEQUENCE [MRNA]</scope>
    <scope>TISSUE SPECIFICITY</scope>
</reference>
<reference key="2">
    <citation type="journal article" date="2004" name="Genome Res.">
        <title>The status, quality, and expansion of the NIH full-length cDNA project: the Mammalian Gene Collection (MGC).</title>
        <authorList>
            <consortium name="The MGC Project Team"/>
        </authorList>
    </citation>
    <scope>NUCLEOTIDE SEQUENCE [LARGE SCALE MRNA]</scope>
</reference>
<reference key="3">
    <citation type="journal article" date="2007" name="BMC Genomics">
        <title>The full-ORF clone resource of the German cDNA consortium.</title>
        <authorList>
            <person name="Bechtel S."/>
            <person name="Rosenfelder H."/>
            <person name="Duda A."/>
            <person name="Schmidt C.P."/>
            <person name="Ernst U."/>
            <person name="Wellenreuther R."/>
            <person name="Mehrle A."/>
            <person name="Schuster C."/>
            <person name="Bahr A."/>
            <person name="Bloecker H."/>
            <person name="Heubner D."/>
            <person name="Hoerlein A."/>
            <person name="Michel G."/>
            <person name="Wedler H."/>
            <person name="Koehrer K."/>
            <person name="Ottenwaelder B."/>
            <person name="Poustka A."/>
            <person name="Wiemann S."/>
            <person name="Schupp I."/>
        </authorList>
    </citation>
    <scope>NUCLEOTIDE SEQUENCE [LARGE SCALE MRNA] OF 466-598</scope>
    <source>
        <tissue>Amygdala</tissue>
    </source>
</reference>
<dbReference type="EC" id="2.4.1.41" evidence="2"/>
<dbReference type="EMBL" id="AF410457">
    <property type="protein sequence ID" value="AAM62306.1"/>
    <property type="molecule type" value="mRNA"/>
</dbReference>
<dbReference type="EMBL" id="BC067524">
    <property type="protein sequence ID" value="AAH67524.1"/>
    <property type="molecule type" value="mRNA"/>
</dbReference>
<dbReference type="EMBL" id="BC067525">
    <property type="protein sequence ID" value="AAH67525.1"/>
    <property type="molecule type" value="mRNA"/>
</dbReference>
<dbReference type="EMBL" id="BC069624">
    <property type="protein sequence ID" value="AAH69624.1"/>
    <property type="molecule type" value="mRNA"/>
</dbReference>
<dbReference type="EMBL" id="BC069628">
    <property type="protein sequence ID" value="AAH69628.1"/>
    <property type="molecule type" value="mRNA"/>
</dbReference>
<dbReference type="EMBL" id="BC069636">
    <property type="protein sequence ID" value="AAH69636.1"/>
    <property type="molecule type" value="mRNA"/>
</dbReference>
<dbReference type="EMBL" id="BC069645">
    <property type="protein sequence ID" value="AAH69645.1"/>
    <property type="molecule type" value="mRNA"/>
</dbReference>
<dbReference type="EMBL" id="BC069997">
    <property type="protein sequence ID" value="AAH69997.1"/>
    <property type="molecule type" value="mRNA"/>
</dbReference>
<dbReference type="EMBL" id="AL137431">
    <property type="protein sequence ID" value="CAB70734.1"/>
    <property type="molecule type" value="mRNA"/>
</dbReference>
<dbReference type="CCDS" id="CCDS5540.1"/>
<dbReference type="PIR" id="T46260">
    <property type="entry name" value="T46260"/>
</dbReference>
<dbReference type="RefSeq" id="NP_071924.1">
    <property type="nucleotide sequence ID" value="NM_022479.3"/>
</dbReference>
<dbReference type="SMR" id="Q6IS24"/>
<dbReference type="BioGRID" id="122161">
    <property type="interactions" value="1"/>
</dbReference>
<dbReference type="FunCoup" id="Q6IS24">
    <property type="interactions" value="209"/>
</dbReference>
<dbReference type="STRING" id="9606.ENSP00000329654"/>
<dbReference type="CAZy" id="CBM13">
    <property type="family name" value="Carbohydrate-Binding Module Family 13"/>
</dbReference>
<dbReference type="CAZy" id="GT27">
    <property type="family name" value="Glycosyltransferase Family 27"/>
</dbReference>
<dbReference type="GlyCosmos" id="Q6IS24">
    <property type="glycosylation" value="3 sites, No reported glycans"/>
</dbReference>
<dbReference type="GlyGen" id="Q6IS24">
    <property type="glycosylation" value="3 sites"/>
</dbReference>
<dbReference type="iPTMnet" id="Q6IS24"/>
<dbReference type="PhosphoSitePlus" id="Q6IS24"/>
<dbReference type="BioMuta" id="GALNT17"/>
<dbReference type="DMDM" id="51315852"/>
<dbReference type="MassIVE" id="Q6IS24"/>
<dbReference type="PaxDb" id="9606-ENSP00000329654"/>
<dbReference type="PeptideAtlas" id="Q6IS24"/>
<dbReference type="ProteomicsDB" id="66491"/>
<dbReference type="Antibodypedia" id="2698">
    <property type="antibodies" value="105 antibodies from 19 providers"/>
</dbReference>
<dbReference type="DNASU" id="64409"/>
<dbReference type="Ensembl" id="ENST00000333538.10">
    <property type="protein sequence ID" value="ENSP00000329654.5"/>
    <property type="gene ID" value="ENSG00000185274.13"/>
</dbReference>
<dbReference type="GeneID" id="64409"/>
<dbReference type="KEGG" id="hsa:64409"/>
<dbReference type="MANE-Select" id="ENST00000333538.10">
    <property type="protein sequence ID" value="ENSP00000329654.5"/>
    <property type="RefSeq nucleotide sequence ID" value="NM_022479.3"/>
    <property type="RefSeq protein sequence ID" value="NP_071924.1"/>
</dbReference>
<dbReference type="UCSC" id="uc003tvy.5">
    <property type="organism name" value="human"/>
</dbReference>
<dbReference type="AGR" id="HGNC:16347"/>
<dbReference type="CTD" id="64409"/>
<dbReference type="DisGeNET" id="64409"/>
<dbReference type="GeneCards" id="GALNT17"/>
<dbReference type="HGNC" id="HGNC:16347">
    <property type="gene designation" value="GALNT17"/>
</dbReference>
<dbReference type="HPA" id="ENSG00000185274">
    <property type="expression patterns" value="Tissue enhanced (brain, choroid plexus)"/>
</dbReference>
<dbReference type="MalaCards" id="GALNT17"/>
<dbReference type="MIM" id="615137">
    <property type="type" value="gene"/>
</dbReference>
<dbReference type="neXtProt" id="NX_Q6IS24"/>
<dbReference type="OpenTargets" id="ENSG00000185274"/>
<dbReference type="PharmGKB" id="PA38124"/>
<dbReference type="VEuPathDB" id="HostDB:ENSG00000185274"/>
<dbReference type="eggNOG" id="KOG3736">
    <property type="taxonomic scope" value="Eukaryota"/>
</dbReference>
<dbReference type="GeneTree" id="ENSGT00940000156014"/>
<dbReference type="InParanoid" id="Q6IS24"/>
<dbReference type="OMA" id="EENDAKY"/>
<dbReference type="OrthoDB" id="9924649at2759"/>
<dbReference type="PAN-GO" id="Q6IS24">
    <property type="GO annotations" value="3 GO annotations based on evolutionary models"/>
</dbReference>
<dbReference type="PhylomeDB" id="Q6IS24"/>
<dbReference type="TreeFam" id="TF313267"/>
<dbReference type="PathwayCommons" id="Q6IS24"/>
<dbReference type="Reactome" id="R-HSA-913709">
    <property type="pathway name" value="O-linked glycosylation of mucins"/>
</dbReference>
<dbReference type="UniPathway" id="UPA00378"/>
<dbReference type="BioGRID-ORCS" id="64409">
    <property type="hits" value="15 hits in 1145 CRISPR screens"/>
</dbReference>
<dbReference type="ChiTaRS" id="GALNT17">
    <property type="organism name" value="human"/>
</dbReference>
<dbReference type="GeneWiki" id="WBSCR17"/>
<dbReference type="GenomeRNAi" id="64409"/>
<dbReference type="Pharos" id="Q6IS24">
    <property type="development level" value="Tbio"/>
</dbReference>
<dbReference type="PRO" id="PR:Q6IS24"/>
<dbReference type="Proteomes" id="UP000005640">
    <property type="component" value="Chromosome 7"/>
</dbReference>
<dbReference type="RNAct" id="Q6IS24">
    <property type="molecule type" value="protein"/>
</dbReference>
<dbReference type="Bgee" id="ENSG00000185274">
    <property type="expression patterns" value="Expressed in trigeminal ganglion and 140 other cell types or tissues"/>
</dbReference>
<dbReference type="ExpressionAtlas" id="Q6IS24">
    <property type="expression patterns" value="baseline and differential"/>
</dbReference>
<dbReference type="GO" id="GO:0005794">
    <property type="term" value="C:Golgi apparatus"/>
    <property type="evidence" value="ECO:0000318"/>
    <property type="project" value="GO_Central"/>
</dbReference>
<dbReference type="GO" id="GO:0000139">
    <property type="term" value="C:Golgi membrane"/>
    <property type="evidence" value="ECO:0007669"/>
    <property type="project" value="UniProtKB-SubCell"/>
</dbReference>
<dbReference type="GO" id="GO:0030246">
    <property type="term" value="F:carbohydrate binding"/>
    <property type="evidence" value="ECO:0007669"/>
    <property type="project" value="UniProtKB-KW"/>
</dbReference>
<dbReference type="GO" id="GO:0046872">
    <property type="term" value="F:metal ion binding"/>
    <property type="evidence" value="ECO:0007669"/>
    <property type="project" value="UniProtKB-KW"/>
</dbReference>
<dbReference type="GO" id="GO:0004653">
    <property type="term" value="F:polypeptide N-acetylgalactosaminyltransferase activity"/>
    <property type="evidence" value="ECO:0000318"/>
    <property type="project" value="GO_Central"/>
</dbReference>
<dbReference type="GO" id="GO:0006493">
    <property type="term" value="P:protein O-linked glycosylation"/>
    <property type="evidence" value="ECO:0000318"/>
    <property type="project" value="GO_Central"/>
</dbReference>
<dbReference type="CDD" id="cd23474">
    <property type="entry name" value="beta-trefoil_Ricin_GALNT17"/>
    <property type="match status" value="1"/>
</dbReference>
<dbReference type="CDD" id="cd02510">
    <property type="entry name" value="pp-GalNAc-T"/>
    <property type="match status" value="1"/>
</dbReference>
<dbReference type="FunFam" id="2.80.10.50:FF:000017">
    <property type="entry name" value="Polypeptide N-acetylgalactosaminyltransferase"/>
    <property type="match status" value="1"/>
</dbReference>
<dbReference type="FunFam" id="3.90.550.10:FF:000192">
    <property type="entry name" value="Polypeptide N-acetylgalactosaminyltransferase 9"/>
    <property type="match status" value="1"/>
</dbReference>
<dbReference type="FunFam" id="3.90.550.10:FF:000203">
    <property type="entry name" value="Polypeptide N-acetylgalactosaminyltransferase 9"/>
    <property type="match status" value="1"/>
</dbReference>
<dbReference type="Gene3D" id="2.80.10.50">
    <property type="match status" value="1"/>
</dbReference>
<dbReference type="Gene3D" id="3.90.550.10">
    <property type="entry name" value="Spore Coat Polysaccharide Biosynthesis Protein SpsA, Chain A"/>
    <property type="match status" value="1"/>
</dbReference>
<dbReference type="InterPro" id="IPR045885">
    <property type="entry name" value="GalNAc-T"/>
</dbReference>
<dbReference type="InterPro" id="IPR001173">
    <property type="entry name" value="Glyco_trans_2-like"/>
</dbReference>
<dbReference type="InterPro" id="IPR029044">
    <property type="entry name" value="Nucleotide-diphossugar_trans"/>
</dbReference>
<dbReference type="InterPro" id="IPR035992">
    <property type="entry name" value="Ricin_B-like_lectins"/>
</dbReference>
<dbReference type="InterPro" id="IPR000772">
    <property type="entry name" value="Ricin_B_lectin"/>
</dbReference>
<dbReference type="PANTHER" id="PTHR11675">
    <property type="entry name" value="N-ACETYLGALACTOSAMINYLTRANSFERASE"/>
    <property type="match status" value="1"/>
</dbReference>
<dbReference type="PANTHER" id="PTHR11675:SF38">
    <property type="entry name" value="POLYPEPTIDE N-ACETYLGALACTOSAMINYLTRANSFERASE 17"/>
    <property type="match status" value="1"/>
</dbReference>
<dbReference type="Pfam" id="PF00535">
    <property type="entry name" value="Glycos_transf_2"/>
    <property type="match status" value="1"/>
</dbReference>
<dbReference type="Pfam" id="PF00652">
    <property type="entry name" value="Ricin_B_lectin"/>
    <property type="match status" value="1"/>
</dbReference>
<dbReference type="SMART" id="SM00458">
    <property type="entry name" value="RICIN"/>
    <property type="match status" value="1"/>
</dbReference>
<dbReference type="SUPFAM" id="SSF53448">
    <property type="entry name" value="Nucleotide-diphospho-sugar transferases"/>
    <property type="match status" value="1"/>
</dbReference>
<dbReference type="SUPFAM" id="SSF50370">
    <property type="entry name" value="Ricin B-like lectins"/>
    <property type="match status" value="1"/>
</dbReference>
<dbReference type="PROSITE" id="PS50231">
    <property type="entry name" value="RICIN_B_LECTIN"/>
    <property type="match status" value="1"/>
</dbReference>
<organism>
    <name type="scientific">Homo sapiens</name>
    <name type="common">Human</name>
    <dbReference type="NCBI Taxonomy" id="9606"/>
    <lineage>
        <taxon>Eukaryota</taxon>
        <taxon>Metazoa</taxon>
        <taxon>Chordata</taxon>
        <taxon>Craniata</taxon>
        <taxon>Vertebrata</taxon>
        <taxon>Euteleostomi</taxon>
        <taxon>Mammalia</taxon>
        <taxon>Eutheria</taxon>
        <taxon>Euarchontoglires</taxon>
        <taxon>Primates</taxon>
        <taxon>Haplorrhini</taxon>
        <taxon>Catarrhini</taxon>
        <taxon>Hominidae</taxon>
        <taxon>Homo</taxon>
    </lineage>
</organism>
<name>GLT17_HUMAN</name>
<gene>
    <name evidence="8" type="primary">GALNT17</name>
    <name evidence="6 8" type="synonym">WBSCR17</name>
</gene>
<protein>
    <recommendedName>
        <fullName evidence="7">Polypeptide N-acetylgalactosaminyltransferase 17</fullName>
        <ecNumber evidence="2">2.4.1.41</ecNumber>
    </recommendedName>
    <alternativeName>
        <fullName>Polypeptide GalNAc transferase-like protein 3</fullName>
        <shortName>GalNAc-T-like protein 3</shortName>
        <shortName>pp-GaNTase-like protein 3</shortName>
    </alternativeName>
    <alternativeName>
        <fullName>Protein-UDP acetylgalactosaminyltransferase-like protein 3</fullName>
    </alternativeName>
    <alternativeName>
        <fullName>UDP-GalNAc:polypeptide N-acetylgalactosaminyltransferase-like protein 3</fullName>
    </alternativeName>
    <alternativeName>
        <fullName evidence="6 8">Williams-Beuren syndrome chromosomal region 17 protein</fullName>
    </alternativeName>
</protein>
<sequence>MASLRRVKVLLVLNLIAVAGFVLFLAKCRPIAVRSGDAFHEIRPRAEVANLSAHSASPIQDAVLKRLSLLEDIVYRQLNGLSKSLGLIEGYGGRGKGGLPATLSPAEEEKAKGPHEKYGYNSYLSEKISLDRSIPDYRPTKCKELKYSKDLPQISIIFIFVNEALSVILRSVHSAVNHTPTHLLKEIILVDDNSDEEELKVPLEEYVHKRYPGLVKVVRNQKREGLIRARIEGWKVATGQVTGFFDAHVEFTAGWAEPVLSRIQENRKRVILPSIDNIKQDNFEVQRYENSAHGYSWELWCMYISPPKDWWDAGDPSLPIRTPAMIGCSFVVNRKFFGEIGLLDPGMDVYGGENIELGIKVWLCGGSMEVLPCSRVAHIERKKKPYNSNIGFYTKRNALRVAEVWMDDYKSHVYIAWNLPLENPGIDIGDVSERRALRKSLKCKNFQWYLDHVYPEMRRYNNTVAYGELRNNKAKDVCLDQGPLENHTAILYPCHGWGPQLARYTKEGFLHLGALGTTTLLPDTRCLVDNSKSRLPQLLDCDKVKSSLYKRWNFIQNGAIMNKGTGRCLEVENRGLAGIDLILRSCTGQRWTIKNSIK</sequence>
<feature type="chain" id="PRO_0000059139" description="Polypeptide N-acetylgalactosaminyltransferase 17">
    <location>
        <begin position="1"/>
        <end position="598"/>
    </location>
</feature>
<feature type="topological domain" description="Cytoplasmic" evidence="3">
    <location>
        <begin position="1"/>
        <end position="6"/>
    </location>
</feature>
<feature type="transmembrane region" description="Helical; Signal-anchor for type II membrane protein" evidence="3">
    <location>
        <begin position="7"/>
        <end position="27"/>
    </location>
</feature>
<feature type="topological domain" description="Lumenal" evidence="3">
    <location>
        <begin position="28"/>
        <end position="598"/>
    </location>
</feature>
<feature type="domain" description="Ricin B-type lectin" evidence="4">
    <location>
        <begin position="465"/>
        <end position="594"/>
    </location>
</feature>
<feature type="region of interest" description="Catalytic subdomain A">
    <location>
        <begin position="151"/>
        <end position="262"/>
    </location>
</feature>
<feature type="region of interest" description="Catalytic subdomain B">
    <location>
        <begin position="319"/>
        <end position="381"/>
    </location>
</feature>
<feature type="binding site" evidence="1">
    <location>
        <position position="192"/>
    </location>
    <ligand>
        <name>substrate</name>
    </ligand>
</feature>
<feature type="binding site" evidence="1">
    <location>
        <position position="223"/>
    </location>
    <ligand>
        <name>substrate</name>
    </ligand>
</feature>
<feature type="binding site" evidence="1">
    <location>
        <position position="246"/>
    </location>
    <ligand>
        <name>Mn(2+)</name>
        <dbReference type="ChEBI" id="CHEBI:29035"/>
    </ligand>
</feature>
<feature type="binding site" evidence="1">
    <location>
        <position position="248"/>
    </location>
    <ligand>
        <name>Mn(2+)</name>
        <dbReference type="ChEBI" id="CHEBI:29035"/>
    </ligand>
</feature>
<feature type="binding site" evidence="1">
    <location>
        <position position="378"/>
    </location>
    <ligand>
        <name>Mn(2+)</name>
        <dbReference type="ChEBI" id="CHEBI:29035"/>
    </ligand>
</feature>
<feature type="binding site" evidence="1">
    <location>
        <position position="381"/>
    </location>
    <ligand>
        <name>substrate</name>
    </ligand>
</feature>
<feature type="binding site" evidence="1">
    <location>
        <position position="386"/>
    </location>
    <ligand>
        <name>substrate</name>
    </ligand>
</feature>
<feature type="glycosylation site" description="N-linked (GlcNAc...) asparagine" evidence="3">
    <location>
        <position position="50"/>
    </location>
</feature>
<feature type="glycosylation site" description="N-linked (GlcNAc...) asparagine" evidence="3">
    <location>
        <position position="461"/>
    </location>
</feature>
<feature type="glycosylation site" description="N-linked (GlcNAc...) asparagine" evidence="3">
    <location>
        <position position="486"/>
    </location>
</feature>
<feature type="disulfide bond" evidence="4">
    <location>
        <begin position="142"/>
        <end position="373"/>
    </location>
</feature>
<feature type="disulfide bond" evidence="4">
    <location>
        <begin position="364"/>
        <end position="443"/>
    </location>
</feature>
<feature type="disulfide bond" evidence="4">
    <location>
        <begin position="478"/>
        <end position="494"/>
    </location>
</feature>
<feature type="disulfide bond" evidence="4">
    <location>
        <begin position="526"/>
        <end position="541"/>
    </location>
</feature>
<feature type="disulfide bond" evidence="4">
    <location>
        <begin position="568"/>
        <end position="586"/>
    </location>
</feature>
<feature type="sequence conflict" description="In Ref. 2; AAH69997." evidence="7" ref="2">
    <original>S</original>
    <variation>P</variation>
    <location>
        <position position="596"/>
    </location>
</feature>
<evidence type="ECO:0000250" key="1"/>
<evidence type="ECO:0000250" key="2">
    <source>
        <dbReference type="UniProtKB" id="Q9HCQ5"/>
    </source>
</evidence>
<evidence type="ECO:0000255" key="3"/>
<evidence type="ECO:0000255" key="4">
    <source>
        <dbReference type="PROSITE-ProRule" id="PRU00174"/>
    </source>
</evidence>
<evidence type="ECO:0000269" key="5">
    <source>
    </source>
</evidence>
<evidence type="ECO:0000303" key="6">
    <source>
    </source>
</evidence>
<evidence type="ECO:0000305" key="7"/>
<evidence type="ECO:0000312" key="8">
    <source>
        <dbReference type="HGNC" id="HGNC:16347"/>
    </source>
</evidence>
<accession>Q6IS24</accession>
<accession>Q8NFV9</accession>
<accession>Q9NTA8</accession>
<keyword id="KW-1015">Disulfide bond</keyword>
<keyword id="KW-0325">Glycoprotein</keyword>
<keyword id="KW-0328">Glycosyltransferase</keyword>
<keyword id="KW-0333">Golgi apparatus</keyword>
<keyword id="KW-0430">Lectin</keyword>
<keyword id="KW-0464">Manganese</keyword>
<keyword id="KW-0472">Membrane</keyword>
<keyword id="KW-0479">Metal-binding</keyword>
<keyword id="KW-1267">Proteomics identification</keyword>
<keyword id="KW-1185">Reference proteome</keyword>
<keyword id="KW-0735">Signal-anchor</keyword>
<keyword id="KW-0808">Transferase</keyword>
<keyword id="KW-0812">Transmembrane</keyword>
<keyword id="KW-1133">Transmembrane helix</keyword>
<keyword id="KW-0856">Williams-Beuren syndrome</keyword>